<reference key="1">
    <citation type="journal article" date="2003" name="J. Bacteriol.">
        <title>Comparative analyses of the complete genome sequences of Pierce's disease and citrus variegated chlorosis strains of Xylella fastidiosa.</title>
        <authorList>
            <person name="Van Sluys M.A."/>
            <person name="de Oliveira M.C."/>
            <person name="Monteiro-Vitorello C.B."/>
            <person name="Miyaki C.Y."/>
            <person name="Furlan L.R."/>
            <person name="Camargo L.E.A."/>
            <person name="da Silva A.C.R."/>
            <person name="Moon D.H."/>
            <person name="Takita M.A."/>
            <person name="Lemos E.G.M."/>
            <person name="Machado M.A."/>
            <person name="Ferro M.I.T."/>
            <person name="da Silva F.R."/>
            <person name="Goldman M.H.S."/>
            <person name="Goldman G.H."/>
            <person name="Lemos M.V.F."/>
            <person name="El-Dorry H."/>
            <person name="Tsai S.M."/>
            <person name="Carrer H."/>
            <person name="Carraro D.M."/>
            <person name="de Oliveira R.C."/>
            <person name="Nunes L.R."/>
            <person name="Siqueira W.J."/>
            <person name="Coutinho L.L."/>
            <person name="Kimura E.T."/>
            <person name="Ferro E.S."/>
            <person name="Harakava R."/>
            <person name="Kuramae E.E."/>
            <person name="Marino C.L."/>
            <person name="Giglioti E."/>
            <person name="Abreu I.L."/>
            <person name="Alves L.M.C."/>
            <person name="do Amaral A.M."/>
            <person name="Baia G.S."/>
            <person name="Blanco S.R."/>
            <person name="Brito M.S."/>
            <person name="Cannavan F.S."/>
            <person name="Celestino A.V."/>
            <person name="da Cunha A.F."/>
            <person name="Fenille R.C."/>
            <person name="Ferro J.A."/>
            <person name="Formighieri E.F."/>
            <person name="Kishi L.T."/>
            <person name="Leoni S.G."/>
            <person name="Oliveira A.R."/>
            <person name="Rosa V.E. Jr."/>
            <person name="Sassaki F.T."/>
            <person name="Sena J.A.D."/>
            <person name="de Souza A.A."/>
            <person name="Truffi D."/>
            <person name="Tsukumo F."/>
            <person name="Yanai G.M."/>
            <person name="Zaros L.G."/>
            <person name="Civerolo E.L."/>
            <person name="Simpson A.J.G."/>
            <person name="Almeida N.F. Jr."/>
            <person name="Setubal J.C."/>
            <person name="Kitajima J.P."/>
        </authorList>
    </citation>
    <scope>NUCLEOTIDE SEQUENCE [LARGE SCALE GENOMIC DNA]</scope>
    <source>
        <strain>Temecula1 / ATCC 700964</strain>
    </source>
</reference>
<accession>Q87DT0</accession>
<dbReference type="EC" id="2.5.1.141" evidence="1"/>
<dbReference type="EMBL" id="AE009442">
    <property type="protein sequence ID" value="AAO28473.1"/>
    <property type="status" value="ALT_INIT"/>
    <property type="molecule type" value="Genomic_DNA"/>
</dbReference>
<dbReference type="RefSeq" id="WP_004090646.1">
    <property type="nucleotide sequence ID" value="NC_004556.1"/>
</dbReference>
<dbReference type="SMR" id="Q87DT0"/>
<dbReference type="GeneID" id="93904315"/>
<dbReference type="KEGG" id="xft:PD_0600"/>
<dbReference type="HOGENOM" id="CLU_029631_0_2_6"/>
<dbReference type="UniPathway" id="UPA00834">
    <property type="reaction ID" value="UER00712"/>
</dbReference>
<dbReference type="Proteomes" id="UP000002516">
    <property type="component" value="Chromosome"/>
</dbReference>
<dbReference type="GO" id="GO:0005886">
    <property type="term" value="C:plasma membrane"/>
    <property type="evidence" value="ECO:0007669"/>
    <property type="project" value="UniProtKB-SubCell"/>
</dbReference>
<dbReference type="GO" id="GO:0008495">
    <property type="term" value="F:protoheme IX farnesyltransferase activity"/>
    <property type="evidence" value="ECO:0007669"/>
    <property type="project" value="UniProtKB-UniRule"/>
</dbReference>
<dbReference type="GO" id="GO:0048034">
    <property type="term" value="P:heme O biosynthetic process"/>
    <property type="evidence" value="ECO:0007669"/>
    <property type="project" value="UniProtKB-UniRule"/>
</dbReference>
<dbReference type="CDD" id="cd13957">
    <property type="entry name" value="PT_UbiA_Cox10"/>
    <property type="match status" value="1"/>
</dbReference>
<dbReference type="FunFam" id="1.10.357.140:FF:000001">
    <property type="entry name" value="Protoheme IX farnesyltransferase"/>
    <property type="match status" value="1"/>
</dbReference>
<dbReference type="Gene3D" id="1.10.357.140">
    <property type="entry name" value="UbiA prenyltransferase"/>
    <property type="match status" value="1"/>
</dbReference>
<dbReference type="HAMAP" id="MF_00154">
    <property type="entry name" value="CyoE_CtaB"/>
    <property type="match status" value="1"/>
</dbReference>
<dbReference type="InterPro" id="IPR006369">
    <property type="entry name" value="Protohaem_IX_farnesylTrfase"/>
</dbReference>
<dbReference type="InterPro" id="IPR000537">
    <property type="entry name" value="UbiA_prenyltransferase"/>
</dbReference>
<dbReference type="InterPro" id="IPR030470">
    <property type="entry name" value="UbiA_prenylTrfase_CS"/>
</dbReference>
<dbReference type="InterPro" id="IPR044878">
    <property type="entry name" value="UbiA_sf"/>
</dbReference>
<dbReference type="NCBIfam" id="TIGR01473">
    <property type="entry name" value="cyoE_ctaB"/>
    <property type="match status" value="1"/>
</dbReference>
<dbReference type="NCBIfam" id="NF003349">
    <property type="entry name" value="PRK04375.1-2"/>
    <property type="match status" value="1"/>
</dbReference>
<dbReference type="PANTHER" id="PTHR43448:SF7">
    <property type="entry name" value="4-HYDROXYBENZOATE SOLANESYLTRANSFERASE"/>
    <property type="match status" value="1"/>
</dbReference>
<dbReference type="PANTHER" id="PTHR43448">
    <property type="entry name" value="PROTOHEME IX FARNESYLTRANSFERASE, MITOCHONDRIAL"/>
    <property type="match status" value="1"/>
</dbReference>
<dbReference type="Pfam" id="PF01040">
    <property type="entry name" value="UbiA"/>
    <property type="match status" value="1"/>
</dbReference>
<dbReference type="PROSITE" id="PS00943">
    <property type="entry name" value="UBIA"/>
    <property type="match status" value="1"/>
</dbReference>
<name>CYOE_XYLFT</name>
<keyword id="KW-0997">Cell inner membrane</keyword>
<keyword id="KW-1003">Cell membrane</keyword>
<keyword id="KW-0350">Heme biosynthesis</keyword>
<keyword id="KW-0472">Membrane</keyword>
<keyword id="KW-1185">Reference proteome</keyword>
<keyword id="KW-0808">Transferase</keyword>
<keyword id="KW-0812">Transmembrane</keyword>
<keyword id="KW-1133">Transmembrane helix</keyword>
<protein>
    <recommendedName>
        <fullName evidence="1">Protoheme IX farnesyltransferase</fullName>
        <ecNumber evidence="1">2.5.1.141</ecNumber>
    </recommendedName>
    <alternativeName>
        <fullName evidence="1">Heme B farnesyltransferase</fullName>
    </alternativeName>
    <alternativeName>
        <fullName evidence="1">Heme O synthase</fullName>
    </alternativeName>
</protein>
<proteinExistence type="inferred from homology"/>
<gene>
    <name evidence="1" type="primary">cyoE</name>
    <name type="ordered locus">PD_0600</name>
</gene>
<comment type="function">
    <text evidence="1">Converts heme B (protoheme IX) to heme O by substitution of the vinyl group on carbon 2 of heme B porphyrin ring with a hydroxyethyl farnesyl side group.</text>
</comment>
<comment type="catalytic activity">
    <reaction evidence="1">
        <text>heme b + (2E,6E)-farnesyl diphosphate + H2O = Fe(II)-heme o + diphosphate</text>
        <dbReference type="Rhea" id="RHEA:28070"/>
        <dbReference type="ChEBI" id="CHEBI:15377"/>
        <dbReference type="ChEBI" id="CHEBI:33019"/>
        <dbReference type="ChEBI" id="CHEBI:60344"/>
        <dbReference type="ChEBI" id="CHEBI:60530"/>
        <dbReference type="ChEBI" id="CHEBI:175763"/>
        <dbReference type="EC" id="2.5.1.141"/>
    </reaction>
</comment>
<comment type="pathway">
    <text evidence="1">Porphyrin-containing compound metabolism; heme O biosynthesis; heme O from protoheme: step 1/1.</text>
</comment>
<comment type="subcellular location">
    <subcellularLocation>
        <location evidence="1">Cell inner membrane</location>
        <topology evidence="1">Multi-pass membrane protein</topology>
    </subcellularLocation>
</comment>
<comment type="miscellaneous">
    <text evidence="1">Carbon 2 of the heme B porphyrin ring is defined according to the Fischer nomenclature.</text>
</comment>
<comment type="similarity">
    <text evidence="1">Belongs to the UbiA prenyltransferase family. Protoheme IX farnesyltransferase subfamily.</text>
</comment>
<comment type="sequence caution" evidence="2">
    <conflict type="erroneous initiation">
        <sequence resource="EMBL-CDS" id="AAO28473"/>
    </conflict>
</comment>
<sequence length="301" mass="33146">MAARLRDYWDLTKPKVVALIVFTALVGMFLAIPGMPSVVQIQSGALGFLGIWLAAAAAAAINQLLDAKIDAQMARTSWRPLVVGKVRPVQVLVFAGVLITLSMTILTLWVNLITAVLTFTSLIGYAVIYTVYLKRMTSQNIVIGGLAGAMPPMLGWAAVTGLSTAADWINASLLVAIIFVWTPPHFWALAIFRRADYAKASIPMLPVTHGVQHTSRQILLYTVILSVVTLLPVATGMSGVFYLGAALVLDAVFLWYAWRLLDPPDELFAMKTFGYSIVYLMALFAFLMFDHWLRLADFYWN</sequence>
<organism>
    <name type="scientific">Xylella fastidiosa (strain Temecula1 / ATCC 700964)</name>
    <dbReference type="NCBI Taxonomy" id="183190"/>
    <lineage>
        <taxon>Bacteria</taxon>
        <taxon>Pseudomonadati</taxon>
        <taxon>Pseudomonadota</taxon>
        <taxon>Gammaproteobacteria</taxon>
        <taxon>Lysobacterales</taxon>
        <taxon>Lysobacteraceae</taxon>
        <taxon>Xylella</taxon>
    </lineage>
</organism>
<feature type="chain" id="PRO_0000326976" description="Protoheme IX farnesyltransferase">
    <location>
        <begin position="1"/>
        <end position="301"/>
    </location>
</feature>
<feature type="transmembrane region" description="Helical" evidence="1">
    <location>
        <begin position="16"/>
        <end position="36"/>
    </location>
</feature>
<feature type="transmembrane region" description="Helical" evidence="1">
    <location>
        <begin position="41"/>
        <end position="61"/>
    </location>
</feature>
<feature type="transmembrane region" description="Helical" evidence="1">
    <location>
        <begin position="93"/>
        <end position="113"/>
    </location>
</feature>
<feature type="transmembrane region" description="Helical" evidence="1">
    <location>
        <begin position="114"/>
        <end position="134"/>
    </location>
</feature>
<feature type="transmembrane region" description="Helical" evidence="1">
    <location>
        <begin position="141"/>
        <end position="161"/>
    </location>
</feature>
<feature type="transmembrane region" description="Helical" evidence="1">
    <location>
        <begin position="172"/>
        <end position="192"/>
    </location>
</feature>
<feature type="transmembrane region" description="Helical" evidence="1">
    <location>
        <begin position="217"/>
        <end position="237"/>
    </location>
</feature>
<feature type="transmembrane region" description="Helical" evidence="1">
    <location>
        <begin position="238"/>
        <end position="258"/>
    </location>
</feature>
<feature type="transmembrane region" description="Helical" evidence="1">
    <location>
        <begin position="273"/>
        <end position="293"/>
    </location>
</feature>
<evidence type="ECO:0000255" key="1">
    <source>
        <dbReference type="HAMAP-Rule" id="MF_00154"/>
    </source>
</evidence>
<evidence type="ECO:0000305" key="2"/>